<comment type="function">
    <text evidence="1">Transfers a succinyl group from succinyl-CoA to L-homoserine, forming succinyl-L-homoserine.</text>
</comment>
<comment type="catalytic activity">
    <reaction evidence="1">
        <text>L-homoserine + succinyl-CoA = O-succinyl-L-homoserine + CoA</text>
        <dbReference type="Rhea" id="RHEA:22008"/>
        <dbReference type="ChEBI" id="CHEBI:57287"/>
        <dbReference type="ChEBI" id="CHEBI:57292"/>
        <dbReference type="ChEBI" id="CHEBI:57476"/>
        <dbReference type="ChEBI" id="CHEBI:57661"/>
        <dbReference type="EC" id="2.3.1.46"/>
    </reaction>
</comment>
<comment type="pathway">
    <text evidence="1">Amino-acid biosynthesis; L-methionine biosynthesis via de novo pathway; O-succinyl-L-homoserine from L-homoserine: step 1/1.</text>
</comment>
<comment type="subunit">
    <text evidence="1">Homodimer.</text>
</comment>
<comment type="subcellular location">
    <subcellularLocation>
        <location evidence="1">Cytoplasm</location>
    </subcellularLocation>
</comment>
<comment type="similarity">
    <text evidence="1">Belongs to the AB hydrolase superfamily. MetX family.</text>
</comment>
<evidence type="ECO:0000255" key="1">
    <source>
        <dbReference type="HAMAP-Rule" id="MF_00296"/>
    </source>
</evidence>
<protein>
    <recommendedName>
        <fullName evidence="1">Homoserine O-succinyltransferase</fullName>
        <shortName evidence="1">HST</shortName>
        <ecNumber evidence="1">2.3.1.46</ecNumber>
    </recommendedName>
    <alternativeName>
        <fullName evidence="1">Homoserine transsuccinylase</fullName>
        <shortName evidence="1">HTS</shortName>
    </alternativeName>
</protein>
<proteinExistence type="inferred from homology"/>
<organism>
    <name type="scientific">Acidithiobacillus ferrooxidans (strain ATCC 53993 / BNL-5-31)</name>
    <name type="common">Leptospirillum ferrooxidans (ATCC 53993)</name>
    <dbReference type="NCBI Taxonomy" id="380394"/>
    <lineage>
        <taxon>Bacteria</taxon>
        <taxon>Pseudomonadati</taxon>
        <taxon>Pseudomonadota</taxon>
        <taxon>Acidithiobacillia</taxon>
        <taxon>Acidithiobacillales</taxon>
        <taxon>Acidithiobacillaceae</taxon>
        <taxon>Acidithiobacillus</taxon>
    </lineage>
</organism>
<dbReference type="EC" id="2.3.1.46" evidence="1"/>
<dbReference type="EMBL" id="CP001132">
    <property type="protein sequence ID" value="ACH82723.1"/>
    <property type="molecule type" value="Genomic_DNA"/>
</dbReference>
<dbReference type="SMR" id="B5ELV1"/>
<dbReference type="ESTHER" id="acif2-metx">
    <property type="family name" value="Homoserine_transacetylase"/>
</dbReference>
<dbReference type="KEGG" id="afe:Lferr_0469"/>
<dbReference type="eggNOG" id="COG2021">
    <property type="taxonomic scope" value="Bacteria"/>
</dbReference>
<dbReference type="HOGENOM" id="CLU_028760_1_2_6"/>
<dbReference type="UniPathway" id="UPA00051">
    <property type="reaction ID" value="UER00075"/>
</dbReference>
<dbReference type="GO" id="GO:0005737">
    <property type="term" value="C:cytoplasm"/>
    <property type="evidence" value="ECO:0007669"/>
    <property type="project" value="UniProtKB-SubCell"/>
</dbReference>
<dbReference type="GO" id="GO:0004414">
    <property type="term" value="F:homoserine O-acetyltransferase activity"/>
    <property type="evidence" value="ECO:0007669"/>
    <property type="project" value="TreeGrafter"/>
</dbReference>
<dbReference type="GO" id="GO:0008899">
    <property type="term" value="F:homoserine O-succinyltransferase activity"/>
    <property type="evidence" value="ECO:0007669"/>
    <property type="project" value="UniProtKB-UniRule"/>
</dbReference>
<dbReference type="GO" id="GO:0009092">
    <property type="term" value="P:homoserine metabolic process"/>
    <property type="evidence" value="ECO:0007669"/>
    <property type="project" value="TreeGrafter"/>
</dbReference>
<dbReference type="GO" id="GO:0009086">
    <property type="term" value="P:methionine biosynthetic process"/>
    <property type="evidence" value="ECO:0007669"/>
    <property type="project" value="UniProtKB-UniRule"/>
</dbReference>
<dbReference type="FunFam" id="1.10.1740.110:FF:000001">
    <property type="entry name" value="Homoserine O-acetyltransferase"/>
    <property type="match status" value="1"/>
</dbReference>
<dbReference type="Gene3D" id="1.10.1740.110">
    <property type="match status" value="1"/>
</dbReference>
<dbReference type="Gene3D" id="3.40.50.1820">
    <property type="entry name" value="alpha/beta hydrolase"/>
    <property type="match status" value="1"/>
</dbReference>
<dbReference type="HAMAP" id="MF_00296">
    <property type="entry name" value="MetX_acyltransf"/>
    <property type="match status" value="1"/>
</dbReference>
<dbReference type="InterPro" id="IPR000073">
    <property type="entry name" value="AB_hydrolase_1"/>
</dbReference>
<dbReference type="InterPro" id="IPR029058">
    <property type="entry name" value="AB_hydrolase_fold"/>
</dbReference>
<dbReference type="InterPro" id="IPR008220">
    <property type="entry name" value="HAT_MetX-like"/>
</dbReference>
<dbReference type="NCBIfam" id="TIGR01392">
    <property type="entry name" value="homoserO_Ac_trn"/>
    <property type="match status" value="1"/>
</dbReference>
<dbReference type="NCBIfam" id="NF001209">
    <property type="entry name" value="PRK00175.1"/>
    <property type="match status" value="1"/>
</dbReference>
<dbReference type="PANTHER" id="PTHR32268">
    <property type="entry name" value="HOMOSERINE O-ACETYLTRANSFERASE"/>
    <property type="match status" value="1"/>
</dbReference>
<dbReference type="PANTHER" id="PTHR32268:SF11">
    <property type="entry name" value="HOMOSERINE O-ACETYLTRANSFERASE"/>
    <property type="match status" value="1"/>
</dbReference>
<dbReference type="Pfam" id="PF00561">
    <property type="entry name" value="Abhydrolase_1"/>
    <property type="match status" value="1"/>
</dbReference>
<dbReference type="PIRSF" id="PIRSF000443">
    <property type="entry name" value="Homoser_Ac_trans"/>
    <property type="match status" value="1"/>
</dbReference>
<dbReference type="SUPFAM" id="SSF53474">
    <property type="entry name" value="alpha/beta-Hydrolases"/>
    <property type="match status" value="1"/>
</dbReference>
<accession>B5ELV1</accession>
<feature type="chain" id="PRO_1000115209" description="Homoserine O-succinyltransferase">
    <location>
        <begin position="1"/>
        <end position="383"/>
    </location>
</feature>
<feature type="domain" description="AB hydrolase-1" evidence="1">
    <location>
        <begin position="51"/>
        <end position="360"/>
    </location>
</feature>
<feature type="active site" description="Nucleophile" evidence="1">
    <location>
        <position position="157"/>
    </location>
</feature>
<feature type="active site" evidence="1">
    <location>
        <position position="323"/>
    </location>
</feature>
<feature type="active site" evidence="1">
    <location>
        <position position="356"/>
    </location>
</feature>
<feature type="binding site" evidence="1">
    <location>
        <position position="227"/>
    </location>
    <ligand>
        <name>substrate</name>
    </ligand>
</feature>
<feature type="binding site" evidence="1">
    <location>
        <position position="357"/>
    </location>
    <ligand>
        <name>substrate</name>
    </ligand>
</feature>
<feature type="site" description="Important for acyl-CoA specificity" evidence="1">
    <location>
        <position position="325"/>
    </location>
</feature>
<reference key="1">
    <citation type="submission" date="2008-08" db="EMBL/GenBank/DDBJ databases">
        <title>Complete sequence of Acidithiobacillus ferrooxidans ATCC 53993.</title>
        <authorList>
            <person name="Lucas S."/>
            <person name="Copeland A."/>
            <person name="Lapidus A."/>
            <person name="Glavina del Rio T."/>
            <person name="Dalin E."/>
            <person name="Tice H."/>
            <person name="Bruce D."/>
            <person name="Goodwin L."/>
            <person name="Pitluck S."/>
            <person name="Sims D."/>
            <person name="Brettin T."/>
            <person name="Detter J.C."/>
            <person name="Han C."/>
            <person name="Kuske C.R."/>
            <person name="Larimer F."/>
            <person name="Land M."/>
            <person name="Hauser L."/>
            <person name="Kyrpides N."/>
            <person name="Lykidis A."/>
            <person name="Borole A.P."/>
        </authorList>
    </citation>
    <scope>NUCLEOTIDE SEQUENCE [LARGE SCALE GENOMIC DNA]</scope>
    <source>
        <strain>ATCC 53993 / BNL-5-31</strain>
    </source>
</reference>
<sequence length="383" mass="42609">MPVEIPADSVGLVTPQTVTFSAPLELECGRSLPGYTLTYETYGTLNAQRSNAILLCHALSGDHHAAGYHSMDDRKPGWWEHLLGPGKAMDTERFFFVCANFIGSCKGSTGPASTNPETGAPWGLDFPMVTVRDWVKTQAELADYLGIEQWAAVVGGSLGGMQVMQWSMDYPERLRHAVVIAAAPKLTAQNIAFNEVCRQAIMTDPEFYNGRYYAHNTKPRRGLSLARMIGHITYLSDNAMRTKFGRDTRGGKAFSFGFDVDFEVESYLRYQGSSFVERFDANSYLYITKALDYFDPASTWGGNLAEAFASTRANFLVISFSSDWRFSPERSREIVQALYTCNRDVSYAEIEAEHGHDSFLMPIPQYVAVLSTYLGRVAEEIGA</sequence>
<gene>
    <name evidence="1" type="primary">metXS</name>
    <name type="ordered locus">Lferr_0469</name>
</gene>
<keyword id="KW-0012">Acyltransferase</keyword>
<keyword id="KW-0028">Amino-acid biosynthesis</keyword>
<keyword id="KW-0963">Cytoplasm</keyword>
<keyword id="KW-0486">Methionine biosynthesis</keyword>
<keyword id="KW-0808">Transferase</keyword>
<name>METXS_ACIF5</name>